<gene>
    <name evidence="1" type="primary">glmM</name>
    <name type="ordered locus">MGAS9429_Spy0878</name>
</gene>
<reference key="1">
    <citation type="journal article" date="2006" name="Proc. Natl. Acad. Sci. U.S.A.">
        <title>Molecular genetic anatomy of inter- and intraserotype variation in the human bacterial pathogen group A Streptococcus.</title>
        <authorList>
            <person name="Beres S.B."/>
            <person name="Richter E.W."/>
            <person name="Nagiec M.J."/>
            <person name="Sumby P."/>
            <person name="Porcella S.F."/>
            <person name="DeLeo F.R."/>
            <person name="Musser J.M."/>
        </authorList>
    </citation>
    <scope>NUCLEOTIDE SEQUENCE [LARGE SCALE GENOMIC DNA]</scope>
    <source>
        <strain>MGAS9429</strain>
    </source>
</reference>
<dbReference type="EC" id="5.4.2.10" evidence="1"/>
<dbReference type="EMBL" id="CP000259">
    <property type="protein sequence ID" value="ABF32066.1"/>
    <property type="molecule type" value="Genomic_DNA"/>
</dbReference>
<dbReference type="RefSeq" id="WP_002989965.1">
    <property type="nucleotide sequence ID" value="NC_008021.1"/>
</dbReference>
<dbReference type="SMR" id="Q1JM03"/>
<dbReference type="KEGG" id="spk:MGAS9429_Spy0878"/>
<dbReference type="HOGENOM" id="CLU_016950_7_0_9"/>
<dbReference type="Proteomes" id="UP000002433">
    <property type="component" value="Chromosome"/>
</dbReference>
<dbReference type="GO" id="GO:0005829">
    <property type="term" value="C:cytosol"/>
    <property type="evidence" value="ECO:0007669"/>
    <property type="project" value="TreeGrafter"/>
</dbReference>
<dbReference type="GO" id="GO:0000287">
    <property type="term" value="F:magnesium ion binding"/>
    <property type="evidence" value="ECO:0007669"/>
    <property type="project" value="UniProtKB-UniRule"/>
</dbReference>
<dbReference type="GO" id="GO:0008966">
    <property type="term" value="F:phosphoglucosamine mutase activity"/>
    <property type="evidence" value="ECO:0007669"/>
    <property type="project" value="UniProtKB-UniRule"/>
</dbReference>
<dbReference type="GO" id="GO:0004615">
    <property type="term" value="F:phosphomannomutase activity"/>
    <property type="evidence" value="ECO:0007669"/>
    <property type="project" value="TreeGrafter"/>
</dbReference>
<dbReference type="GO" id="GO:0005975">
    <property type="term" value="P:carbohydrate metabolic process"/>
    <property type="evidence" value="ECO:0007669"/>
    <property type="project" value="InterPro"/>
</dbReference>
<dbReference type="GO" id="GO:0009252">
    <property type="term" value="P:peptidoglycan biosynthetic process"/>
    <property type="evidence" value="ECO:0007669"/>
    <property type="project" value="TreeGrafter"/>
</dbReference>
<dbReference type="GO" id="GO:0006048">
    <property type="term" value="P:UDP-N-acetylglucosamine biosynthetic process"/>
    <property type="evidence" value="ECO:0007669"/>
    <property type="project" value="TreeGrafter"/>
</dbReference>
<dbReference type="CDD" id="cd05802">
    <property type="entry name" value="GlmM"/>
    <property type="match status" value="1"/>
</dbReference>
<dbReference type="FunFam" id="3.30.310.50:FF:000001">
    <property type="entry name" value="Phosphoglucosamine mutase"/>
    <property type="match status" value="1"/>
</dbReference>
<dbReference type="FunFam" id="3.40.120.10:FF:000001">
    <property type="entry name" value="Phosphoglucosamine mutase"/>
    <property type="match status" value="1"/>
</dbReference>
<dbReference type="FunFam" id="3.40.120.10:FF:000002">
    <property type="entry name" value="Phosphoglucosamine mutase"/>
    <property type="match status" value="1"/>
</dbReference>
<dbReference type="Gene3D" id="3.40.120.10">
    <property type="entry name" value="Alpha-D-Glucose-1,6-Bisphosphate, subunit A, domain 3"/>
    <property type="match status" value="3"/>
</dbReference>
<dbReference type="Gene3D" id="3.30.310.50">
    <property type="entry name" value="Alpha-D-phosphohexomutase, C-terminal domain"/>
    <property type="match status" value="1"/>
</dbReference>
<dbReference type="HAMAP" id="MF_01554_B">
    <property type="entry name" value="GlmM_B"/>
    <property type="match status" value="1"/>
</dbReference>
<dbReference type="InterPro" id="IPR005844">
    <property type="entry name" value="A-D-PHexomutase_a/b/a-I"/>
</dbReference>
<dbReference type="InterPro" id="IPR016055">
    <property type="entry name" value="A-D-PHexomutase_a/b/a-I/II/III"/>
</dbReference>
<dbReference type="InterPro" id="IPR005845">
    <property type="entry name" value="A-D-PHexomutase_a/b/a-II"/>
</dbReference>
<dbReference type="InterPro" id="IPR005846">
    <property type="entry name" value="A-D-PHexomutase_a/b/a-III"/>
</dbReference>
<dbReference type="InterPro" id="IPR005843">
    <property type="entry name" value="A-D-PHexomutase_C"/>
</dbReference>
<dbReference type="InterPro" id="IPR036900">
    <property type="entry name" value="A-D-PHexomutase_C_sf"/>
</dbReference>
<dbReference type="InterPro" id="IPR016066">
    <property type="entry name" value="A-D-PHexomutase_CS"/>
</dbReference>
<dbReference type="InterPro" id="IPR005841">
    <property type="entry name" value="Alpha-D-phosphohexomutase_SF"/>
</dbReference>
<dbReference type="InterPro" id="IPR006352">
    <property type="entry name" value="GlmM_bact"/>
</dbReference>
<dbReference type="InterPro" id="IPR050060">
    <property type="entry name" value="Phosphoglucosamine_mutase"/>
</dbReference>
<dbReference type="NCBIfam" id="TIGR01455">
    <property type="entry name" value="glmM"/>
    <property type="match status" value="1"/>
</dbReference>
<dbReference type="PANTHER" id="PTHR42946:SF1">
    <property type="entry name" value="PHOSPHOGLUCOMUTASE (ALPHA-D-GLUCOSE-1,6-BISPHOSPHATE-DEPENDENT)"/>
    <property type="match status" value="1"/>
</dbReference>
<dbReference type="PANTHER" id="PTHR42946">
    <property type="entry name" value="PHOSPHOHEXOSE MUTASE"/>
    <property type="match status" value="1"/>
</dbReference>
<dbReference type="Pfam" id="PF02878">
    <property type="entry name" value="PGM_PMM_I"/>
    <property type="match status" value="1"/>
</dbReference>
<dbReference type="Pfam" id="PF02879">
    <property type="entry name" value="PGM_PMM_II"/>
    <property type="match status" value="1"/>
</dbReference>
<dbReference type="Pfam" id="PF02880">
    <property type="entry name" value="PGM_PMM_III"/>
    <property type="match status" value="1"/>
</dbReference>
<dbReference type="Pfam" id="PF00408">
    <property type="entry name" value="PGM_PMM_IV"/>
    <property type="match status" value="1"/>
</dbReference>
<dbReference type="PRINTS" id="PR00509">
    <property type="entry name" value="PGMPMM"/>
</dbReference>
<dbReference type="SUPFAM" id="SSF55957">
    <property type="entry name" value="Phosphoglucomutase, C-terminal domain"/>
    <property type="match status" value="1"/>
</dbReference>
<dbReference type="SUPFAM" id="SSF53738">
    <property type="entry name" value="Phosphoglucomutase, first 3 domains"/>
    <property type="match status" value="3"/>
</dbReference>
<dbReference type="PROSITE" id="PS00710">
    <property type="entry name" value="PGM_PMM"/>
    <property type="match status" value="1"/>
</dbReference>
<organism>
    <name type="scientific">Streptococcus pyogenes serotype M12 (strain MGAS9429)</name>
    <dbReference type="NCBI Taxonomy" id="370551"/>
    <lineage>
        <taxon>Bacteria</taxon>
        <taxon>Bacillati</taxon>
        <taxon>Bacillota</taxon>
        <taxon>Bacilli</taxon>
        <taxon>Lactobacillales</taxon>
        <taxon>Streptococcaceae</taxon>
        <taxon>Streptococcus</taxon>
    </lineage>
</organism>
<name>GLMM_STRPC</name>
<comment type="function">
    <text evidence="1">Catalyzes the conversion of glucosamine-6-phosphate to glucosamine-1-phosphate.</text>
</comment>
<comment type="catalytic activity">
    <reaction evidence="1">
        <text>alpha-D-glucosamine 1-phosphate = D-glucosamine 6-phosphate</text>
        <dbReference type="Rhea" id="RHEA:23424"/>
        <dbReference type="ChEBI" id="CHEBI:58516"/>
        <dbReference type="ChEBI" id="CHEBI:58725"/>
        <dbReference type="EC" id="5.4.2.10"/>
    </reaction>
</comment>
<comment type="cofactor">
    <cofactor evidence="1">
        <name>Mg(2+)</name>
        <dbReference type="ChEBI" id="CHEBI:18420"/>
    </cofactor>
    <text evidence="1">Binds 1 Mg(2+) ion per subunit.</text>
</comment>
<comment type="PTM">
    <text evidence="1">Activated by phosphorylation.</text>
</comment>
<comment type="similarity">
    <text evidence="1">Belongs to the phosphohexose mutase family.</text>
</comment>
<evidence type="ECO:0000255" key="1">
    <source>
        <dbReference type="HAMAP-Rule" id="MF_01554"/>
    </source>
</evidence>
<feature type="chain" id="PRO_0000301388" description="Phosphoglucosamine mutase">
    <location>
        <begin position="1"/>
        <end position="451"/>
    </location>
</feature>
<feature type="active site" description="Phosphoserine intermediate" evidence="1">
    <location>
        <position position="101"/>
    </location>
</feature>
<feature type="binding site" description="via phosphate group" evidence="1">
    <location>
        <position position="101"/>
    </location>
    <ligand>
        <name>Mg(2+)</name>
        <dbReference type="ChEBI" id="CHEBI:18420"/>
    </ligand>
</feature>
<feature type="binding site" evidence="1">
    <location>
        <position position="240"/>
    </location>
    <ligand>
        <name>Mg(2+)</name>
        <dbReference type="ChEBI" id="CHEBI:18420"/>
    </ligand>
</feature>
<feature type="binding site" evidence="1">
    <location>
        <position position="242"/>
    </location>
    <ligand>
        <name>Mg(2+)</name>
        <dbReference type="ChEBI" id="CHEBI:18420"/>
    </ligand>
</feature>
<feature type="binding site" evidence="1">
    <location>
        <position position="244"/>
    </location>
    <ligand>
        <name>Mg(2+)</name>
        <dbReference type="ChEBI" id="CHEBI:18420"/>
    </ligand>
</feature>
<feature type="modified residue" description="Phosphoserine" evidence="1">
    <location>
        <position position="101"/>
    </location>
</feature>
<sequence>MGKYFGTDGVRGEANVELTPELAFKLGRFGGYVLSQHETERPKVFVARDTRISGEMLESALIAGLLSVGIEVYKLGVLATPGVSYLVRTEKASAGVMISASHNPALDNGIKFFGNDGFKLADDQELEIEALLDAPEDTLPRPSAEGLGTLVDYPEGLRKYEKFLVTTGTDLSGMTVALDTANGAASVSARDVFLDLNAEIAVIGEKPNGLNINDGVGSTHPEQLQELVKETGADLGLAFDGDSDRLIAVDETGEIVDGDRIIFIIGKYLSEKGLLAHNTIVTTVMSNLGFHKALDKQGINKAITAVGDRYVVEEMRSSGYNLGGEQSGHVIIMDYNTTGDGQLTAIQLAKVMKETGKSLSELAAEVTIYPQKLVNIRVENSMKDRAMEVPAIANIIAKMEDEMAGNGRILVRPSGTEPLLRVMAEAPTDAEVDYYVDTIADVVRTEIGCDN</sequence>
<proteinExistence type="inferred from homology"/>
<protein>
    <recommendedName>
        <fullName evidence="1">Phosphoglucosamine mutase</fullName>
        <ecNumber evidence="1">5.4.2.10</ecNumber>
    </recommendedName>
</protein>
<keyword id="KW-0413">Isomerase</keyword>
<keyword id="KW-0460">Magnesium</keyword>
<keyword id="KW-0479">Metal-binding</keyword>
<keyword id="KW-0597">Phosphoprotein</keyword>
<accession>Q1JM03</accession>